<accession>Q2UT29</accession>
<sequence>MKRSALILSFLPLVFGCDNPKSPGHSCASVYSVSSAAASSFCATFTASTVTATTGVPEALLSNCDYKTKHLSSACSCLGTAAVPTVATPSSVSSVYITSATATPTSFTFKTSTAHIVKVAKAATSSTAVVTTPVSVPTASSSFTGNGGTTCTVTEYAAISSAVASCSNILLSDIYAPPSSTIDLQGLQTGAAVIFAGKTTFGDTADSDFDPIVVSGTSVTITGVEGHVIDGNGAAYWDGQGSNGGSDKPDHFFVVKDMYNSRIENLYIQNWPVHCFEIESTEHLTVSGLTLNNSAGDAANSKSDGDPAAHNSDGFDIKESSYFTLENTWVHNQDDCVAVTSGTDIVVDGMYCYGGHGLSIGSIGGKSDNTVNGVTFSNSQVISSQNGCRIKTNSGETGEVYNIRYENITLSDISDYGIDVQQDYLNGGPTGEPTNGVTIANVTFVDVTGTMSDGKDYYILCGDDSCSNFVFDGVSITGGSGDSCNYPSTGCP</sequence>
<reference key="1">
    <citation type="journal article" date="2005" name="Nature">
        <title>Genome sequencing and analysis of Aspergillus oryzae.</title>
        <authorList>
            <person name="Machida M."/>
            <person name="Asai K."/>
            <person name="Sano M."/>
            <person name="Tanaka T."/>
            <person name="Kumagai T."/>
            <person name="Terai G."/>
            <person name="Kusumoto K."/>
            <person name="Arima T."/>
            <person name="Akita O."/>
            <person name="Kashiwagi Y."/>
            <person name="Abe K."/>
            <person name="Gomi K."/>
            <person name="Horiuchi H."/>
            <person name="Kitamoto K."/>
            <person name="Kobayashi T."/>
            <person name="Takeuchi M."/>
            <person name="Denning D.W."/>
            <person name="Galagan J.E."/>
            <person name="Nierman W.C."/>
            <person name="Yu J."/>
            <person name="Archer D.B."/>
            <person name="Bennett J.W."/>
            <person name="Bhatnagar D."/>
            <person name="Cleveland T.E."/>
            <person name="Fedorova N.D."/>
            <person name="Gotoh O."/>
            <person name="Horikawa H."/>
            <person name="Hosoyama A."/>
            <person name="Ichinomiya M."/>
            <person name="Igarashi R."/>
            <person name="Iwashita K."/>
            <person name="Juvvadi P.R."/>
            <person name="Kato M."/>
            <person name="Kato Y."/>
            <person name="Kin T."/>
            <person name="Kokubun A."/>
            <person name="Maeda H."/>
            <person name="Maeyama N."/>
            <person name="Maruyama J."/>
            <person name="Nagasaki H."/>
            <person name="Nakajima T."/>
            <person name="Oda K."/>
            <person name="Okada K."/>
            <person name="Paulsen I."/>
            <person name="Sakamoto K."/>
            <person name="Sawano T."/>
            <person name="Takahashi M."/>
            <person name="Takase K."/>
            <person name="Terabayashi Y."/>
            <person name="Wortman J.R."/>
            <person name="Yamada O."/>
            <person name="Yamagata Y."/>
            <person name="Anazawa H."/>
            <person name="Hata Y."/>
            <person name="Koide Y."/>
            <person name="Komori T."/>
            <person name="Koyama Y."/>
            <person name="Minetoki T."/>
            <person name="Suharnan S."/>
            <person name="Tanaka A."/>
            <person name="Isono K."/>
            <person name="Kuhara S."/>
            <person name="Ogasawara N."/>
            <person name="Kikuchi H."/>
        </authorList>
    </citation>
    <scope>NUCLEOTIDE SEQUENCE [LARGE SCALE GENOMIC DNA]</scope>
    <source>
        <strain>ATCC 42149 / RIB 40</strain>
    </source>
</reference>
<name>PGLRD_ASPOR</name>
<protein>
    <recommendedName>
        <fullName>Probable endopolygalacturonase D</fullName>
        <shortName>PGD</shortName>
        <ecNumber>3.2.1.15</ecNumber>
    </recommendedName>
    <alternativeName>
        <fullName>Pectinase D</fullName>
    </alternativeName>
    <alternativeName>
        <fullName>Polygalacturonase D</fullName>
    </alternativeName>
</protein>
<keyword id="KW-0961">Cell wall biogenesis/degradation</keyword>
<keyword id="KW-1015">Disulfide bond</keyword>
<keyword id="KW-0325">Glycoprotein</keyword>
<keyword id="KW-0326">Glycosidase</keyword>
<keyword id="KW-0378">Hydrolase</keyword>
<keyword id="KW-1185">Reference proteome</keyword>
<keyword id="KW-0677">Repeat</keyword>
<keyword id="KW-0964">Secreted</keyword>
<keyword id="KW-0732">Signal</keyword>
<comment type="function">
    <text evidence="1">Involved in maceration and soft-rotting of plant tissue. Hydrolyzes the 1,4-alpha glycosidic bonds of de-esterified pectate in the smooth region of the plant cell wall (By similarity).</text>
</comment>
<comment type="catalytic activity">
    <reaction>
        <text>(1,4-alpha-D-galacturonosyl)n+m + H2O = (1,4-alpha-D-galacturonosyl)n + (1,4-alpha-D-galacturonosyl)m.</text>
        <dbReference type="EC" id="3.2.1.15"/>
    </reaction>
</comment>
<comment type="subcellular location">
    <subcellularLocation>
        <location evidence="1">Secreted</location>
    </subcellularLocation>
</comment>
<comment type="similarity">
    <text evidence="4">Belongs to the glycosyl hydrolase 28 family.</text>
</comment>
<comment type="sequence caution" evidence="4">
    <conflict type="erroneous gene model prediction">
        <sequence resource="EMBL-CDS" id="BAE55286"/>
    </conflict>
</comment>
<proteinExistence type="inferred from homology"/>
<gene>
    <name type="primary">pgaD</name>
    <name type="ORF">AO090005000186</name>
</gene>
<dbReference type="EC" id="3.2.1.15"/>
<dbReference type="EMBL" id="BA000049">
    <property type="protein sequence ID" value="BAE55286.1"/>
    <property type="status" value="ALT_SEQ"/>
    <property type="molecule type" value="Genomic_DNA"/>
</dbReference>
<dbReference type="RefSeq" id="XP_001817288.2">
    <property type="nucleotide sequence ID" value="XM_001817236.2"/>
</dbReference>
<dbReference type="SMR" id="Q2UT29"/>
<dbReference type="STRING" id="510516.Q2UT29"/>
<dbReference type="CAZy" id="GH28">
    <property type="family name" value="Glycoside Hydrolase Family 28"/>
</dbReference>
<dbReference type="GlyCosmos" id="Q2UT29">
    <property type="glycosylation" value="3 sites, No reported glycans"/>
</dbReference>
<dbReference type="EnsemblFungi" id="BAE55286">
    <property type="protein sequence ID" value="BAE55286"/>
    <property type="gene ID" value="AO090005000186"/>
</dbReference>
<dbReference type="Proteomes" id="UP000006564">
    <property type="component" value="Chromosome 1"/>
</dbReference>
<dbReference type="GO" id="GO:0005576">
    <property type="term" value="C:extracellular region"/>
    <property type="evidence" value="ECO:0000250"/>
    <property type="project" value="UniProtKB"/>
</dbReference>
<dbReference type="GO" id="GO:0004650">
    <property type="term" value="F:polygalacturonase activity"/>
    <property type="evidence" value="ECO:0000250"/>
    <property type="project" value="UniProtKB"/>
</dbReference>
<dbReference type="GO" id="GO:0071555">
    <property type="term" value="P:cell wall organization"/>
    <property type="evidence" value="ECO:0007669"/>
    <property type="project" value="UniProtKB-KW"/>
</dbReference>
<dbReference type="GO" id="GO:0045490">
    <property type="term" value="P:pectin catabolic process"/>
    <property type="evidence" value="ECO:0000250"/>
    <property type="project" value="UniProtKB"/>
</dbReference>
<dbReference type="FunFam" id="2.160.20.10:FF:000002">
    <property type="entry name" value="Endopolygalacturonase D"/>
    <property type="match status" value="1"/>
</dbReference>
<dbReference type="Gene3D" id="2.160.20.10">
    <property type="entry name" value="Single-stranded right-handed beta-helix, Pectin lyase-like"/>
    <property type="match status" value="1"/>
</dbReference>
<dbReference type="InterPro" id="IPR000743">
    <property type="entry name" value="Glyco_hydro_28"/>
</dbReference>
<dbReference type="InterPro" id="IPR050434">
    <property type="entry name" value="Glycosyl_hydrlase_28"/>
</dbReference>
<dbReference type="InterPro" id="IPR006626">
    <property type="entry name" value="PbH1"/>
</dbReference>
<dbReference type="InterPro" id="IPR012334">
    <property type="entry name" value="Pectin_lyas_fold"/>
</dbReference>
<dbReference type="InterPro" id="IPR011050">
    <property type="entry name" value="Pectin_lyase_fold/virulence"/>
</dbReference>
<dbReference type="PANTHER" id="PTHR31884:SF9">
    <property type="entry name" value="ENDOPOLYGALACTURONASE D-RELATED"/>
    <property type="match status" value="1"/>
</dbReference>
<dbReference type="PANTHER" id="PTHR31884">
    <property type="entry name" value="POLYGALACTURONASE"/>
    <property type="match status" value="1"/>
</dbReference>
<dbReference type="Pfam" id="PF00295">
    <property type="entry name" value="Glyco_hydro_28"/>
    <property type="match status" value="1"/>
</dbReference>
<dbReference type="SMART" id="SM00710">
    <property type="entry name" value="PbH1"/>
    <property type="match status" value="7"/>
</dbReference>
<dbReference type="SUPFAM" id="SSF51126">
    <property type="entry name" value="Pectin lyase-like"/>
    <property type="match status" value="1"/>
</dbReference>
<dbReference type="PROSITE" id="PS00502">
    <property type="entry name" value="POLYGALACTURONASE"/>
    <property type="match status" value="1"/>
</dbReference>
<organism>
    <name type="scientific">Aspergillus oryzae (strain ATCC 42149 / RIB 40)</name>
    <name type="common">Yellow koji mold</name>
    <dbReference type="NCBI Taxonomy" id="510516"/>
    <lineage>
        <taxon>Eukaryota</taxon>
        <taxon>Fungi</taxon>
        <taxon>Dikarya</taxon>
        <taxon>Ascomycota</taxon>
        <taxon>Pezizomycotina</taxon>
        <taxon>Eurotiomycetes</taxon>
        <taxon>Eurotiomycetidae</taxon>
        <taxon>Eurotiales</taxon>
        <taxon>Aspergillaceae</taxon>
        <taxon>Aspergillus</taxon>
        <taxon>Aspergillus subgen. Circumdati</taxon>
    </lineage>
</organism>
<evidence type="ECO:0000250" key="1"/>
<evidence type="ECO:0000255" key="2"/>
<evidence type="ECO:0000255" key="3">
    <source>
        <dbReference type="PROSITE-ProRule" id="PRU10052"/>
    </source>
</evidence>
<evidence type="ECO:0000305" key="4"/>
<feature type="signal peptide" evidence="2">
    <location>
        <begin position="1"/>
        <end position="16"/>
    </location>
</feature>
<feature type="chain" id="PRO_0000393662" description="Probable endopolygalacturonase D">
    <location>
        <begin position="17"/>
        <end position="492"/>
    </location>
</feature>
<feature type="repeat" description="PbH1 1">
    <location>
        <begin position="216"/>
        <end position="238"/>
    </location>
</feature>
<feature type="repeat" description="PbH1 2">
    <location>
        <begin position="258"/>
        <end position="280"/>
    </location>
</feature>
<feature type="repeat" description="PbH1 3">
    <location>
        <begin position="281"/>
        <end position="319"/>
    </location>
</feature>
<feature type="repeat" description="PbH1 4">
    <location>
        <begin position="320"/>
        <end position="341"/>
    </location>
</feature>
<feature type="repeat" description="PbH1 5">
    <location>
        <begin position="371"/>
        <end position="392"/>
    </location>
</feature>
<feature type="repeat" description="PbH1 6">
    <location>
        <begin position="400"/>
        <end position="422"/>
    </location>
</feature>
<feature type="repeat" description="PbH1 7">
    <location>
        <begin position="434"/>
        <end position="478"/>
    </location>
</feature>
<feature type="active site" description="Proton donor" evidence="3">
    <location>
        <position position="334"/>
    </location>
</feature>
<feature type="active site" evidence="3">
    <location>
        <position position="356"/>
    </location>
</feature>
<feature type="glycosylation site" description="N-linked (GlcNAc...) asparagine" evidence="2">
    <location>
        <position position="292"/>
    </location>
</feature>
<feature type="glycosylation site" description="N-linked (GlcNAc...) asparagine" evidence="2">
    <location>
        <position position="407"/>
    </location>
</feature>
<feature type="glycosylation site" description="N-linked (GlcNAc...) asparagine" evidence="2">
    <location>
        <position position="441"/>
    </location>
</feature>
<feature type="disulfide bond" evidence="1">
    <location>
        <begin position="151"/>
        <end position="166"/>
    </location>
</feature>
<feature type="disulfide bond" evidence="1">
    <location>
        <begin position="336"/>
        <end position="352"/>
    </location>
</feature>
<feature type="disulfide bond" evidence="1">
    <location>
        <begin position="461"/>
        <end position="466"/>
    </location>
</feature>
<feature type="disulfide bond" evidence="1">
    <location>
        <begin position="484"/>
        <end position="491"/>
    </location>
</feature>